<protein>
    <recommendedName>
        <fullName evidence="1">CTP synthase</fullName>
        <ecNumber evidence="1">6.3.4.2</ecNumber>
    </recommendedName>
    <alternativeName>
        <fullName evidence="1">Cytidine 5'-triphosphate synthase</fullName>
    </alternativeName>
    <alternativeName>
        <fullName evidence="1">Cytidine triphosphate synthetase</fullName>
        <shortName evidence="1">CTP synthetase</shortName>
        <shortName evidence="1">CTPS</shortName>
    </alternativeName>
    <alternativeName>
        <fullName evidence="1">UTP--ammonia ligase</fullName>
    </alternativeName>
</protein>
<gene>
    <name evidence="1" type="primary">pyrG</name>
    <name type="ordered locus">CKL_3715</name>
</gene>
<sequence>MNTKYIFVTGGVVSSLGKGITAASLGRLLKNRGLKVSIQKFDPYINIDPGTMSPYQHGEVFVTDDGAETDLDLGHYERFIDESLSRNNNITTGKIYWSVISKERKGDYLGSTVQVIPHITNEIKSRVYKVAEGKNIDVVITEIGGTVGDIESLPFLEAIRQIKYDVGVENVCFIHVTLVPYLKKSGELKTKPTQHSVKELRSIGIQPDIIVCRSEKLISNDLKEKIGLFCNVERDSVIQNLDAENLYEVPLMLHREGLDNLVCKKLKLQCNETDNTEWIIMVDKIKKLSKNVNIALVGKYVELHDAYISVVEALSHGGYANDANVNIKWLNSEDITKDNIEEYLKDIDGILIPGGFGDRGIEGKILAAGWARKNKIPFFGICLGMQCALIEFARSVLKYEGAHSSEINPETKYPVIDLMPDQKDIDEKGGTMRLGKYPCKLLKNSISFKAYGEDVIYERHRHRYEFNNIYRDELIESGLVLSGTSPDSKLVEIIEIKEHPWFIGVQFHPELKSRPNRPHPLFRDFIKASLNSKHKFD</sequence>
<dbReference type="EC" id="6.3.4.2" evidence="1"/>
<dbReference type="EMBL" id="CP000673">
    <property type="protein sequence ID" value="EDK35700.1"/>
    <property type="molecule type" value="Genomic_DNA"/>
</dbReference>
<dbReference type="RefSeq" id="WP_012104034.1">
    <property type="nucleotide sequence ID" value="NC_009706.1"/>
</dbReference>
<dbReference type="SMR" id="A5N3K4"/>
<dbReference type="STRING" id="431943.CKL_3715"/>
<dbReference type="MEROPS" id="C26.964"/>
<dbReference type="KEGG" id="ckl:CKL_3715"/>
<dbReference type="eggNOG" id="COG0504">
    <property type="taxonomic scope" value="Bacteria"/>
</dbReference>
<dbReference type="HOGENOM" id="CLU_011675_5_0_9"/>
<dbReference type="UniPathway" id="UPA00159">
    <property type="reaction ID" value="UER00277"/>
</dbReference>
<dbReference type="Proteomes" id="UP000002411">
    <property type="component" value="Chromosome"/>
</dbReference>
<dbReference type="GO" id="GO:0005829">
    <property type="term" value="C:cytosol"/>
    <property type="evidence" value="ECO:0007669"/>
    <property type="project" value="TreeGrafter"/>
</dbReference>
<dbReference type="GO" id="GO:0005524">
    <property type="term" value="F:ATP binding"/>
    <property type="evidence" value="ECO:0007669"/>
    <property type="project" value="UniProtKB-KW"/>
</dbReference>
<dbReference type="GO" id="GO:0003883">
    <property type="term" value="F:CTP synthase activity"/>
    <property type="evidence" value="ECO:0007669"/>
    <property type="project" value="UniProtKB-UniRule"/>
</dbReference>
<dbReference type="GO" id="GO:0004359">
    <property type="term" value="F:glutaminase activity"/>
    <property type="evidence" value="ECO:0007669"/>
    <property type="project" value="RHEA"/>
</dbReference>
<dbReference type="GO" id="GO:0042802">
    <property type="term" value="F:identical protein binding"/>
    <property type="evidence" value="ECO:0007669"/>
    <property type="project" value="TreeGrafter"/>
</dbReference>
<dbReference type="GO" id="GO:0046872">
    <property type="term" value="F:metal ion binding"/>
    <property type="evidence" value="ECO:0007669"/>
    <property type="project" value="UniProtKB-KW"/>
</dbReference>
<dbReference type="GO" id="GO:0044210">
    <property type="term" value="P:'de novo' CTP biosynthetic process"/>
    <property type="evidence" value="ECO:0007669"/>
    <property type="project" value="UniProtKB-UniRule"/>
</dbReference>
<dbReference type="GO" id="GO:0019856">
    <property type="term" value="P:pyrimidine nucleobase biosynthetic process"/>
    <property type="evidence" value="ECO:0007669"/>
    <property type="project" value="TreeGrafter"/>
</dbReference>
<dbReference type="CDD" id="cd03113">
    <property type="entry name" value="CTPS_N"/>
    <property type="match status" value="1"/>
</dbReference>
<dbReference type="CDD" id="cd01746">
    <property type="entry name" value="GATase1_CTP_Synthase"/>
    <property type="match status" value="1"/>
</dbReference>
<dbReference type="FunFam" id="3.40.50.300:FF:000009">
    <property type="entry name" value="CTP synthase"/>
    <property type="match status" value="1"/>
</dbReference>
<dbReference type="FunFam" id="3.40.50.880:FF:000002">
    <property type="entry name" value="CTP synthase"/>
    <property type="match status" value="1"/>
</dbReference>
<dbReference type="Gene3D" id="3.40.50.880">
    <property type="match status" value="1"/>
</dbReference>
<dbReference type="Gene3D" id="3.40.50.300">
    <property type="entry name" value="P-loop containing nucleotide triphosphate hydrolases"/>
    <property type="match status" value="1"/>
</dbReference>
<dbReference type="HAMAP" id="MF_01227">
    <property type="entry name" value="PyrG"/>
    <property type="match status" value="1"/>
</dbReference>
<dbReference type="InterPro" id="IPR029062">
    <property type="entry name" value="Class_I_gatase-like"/>
</dbReference>
<dbReference type="InterPro" id="IPR004468">
    <property type="entry name" value="CTP_synthase"/>
</dbReference>
<dbReference type="InterPro" id="IPR017456">
    <property type="entry name" value="CTP_synthase_N"/>
</dbReference>
<dbReference type="InterPro" id="IPR017926">
    <property type="entry name" value="GATASE"/>
</dbReference>
<dbReference type="InterPro" id="IPR033828">
    <property type="entry name" value="GATase1_CTP_Synthase"/>
</dbReference>
<dbReference type="InterPro" id="IPR027417">
    <property type="entry name" value="P-loop_NTPase"/>
</dbReference>
<dbReference type="NCBIfam" id="NF003792">
    <property type="entry name" value="PRK05380.1"/>
    <property type="match status" value="1"/>
</dbReference>
<dbReference type="NCBIfam" id="TIGR00337">
    <property type="entry name" value="PyrG"/>
    <property type="match status" value="1"/>
</dbReference>
<dbReference type="PANTHER" id="PTHR11550">
    <property type="entry name" value="CTP SYNTHASE"/>
    <property type="match status" value="1"/>
</dbReference>
<dbReference type="PANTHER" id="PTHR11550:SF0">
    <property type="entry name" value="CTP SYNTHASE-RELATED"/>
    <property type="match status" value="1"/>
</dbReference>
<dbReference type="Pfam" id="PF06418">
    <property type="entry name" value="CTP_synth_N"/>
    <property type="match status" value="1"/>
</dbReference>
<dbReference type="Pfam" id="PF00117">
    <property type="entry name" value="GATase"/>
    <property type="match status" value="1"/>
</dbReference>
<dbReference type="SUPFAM" id="SSF52317">
    <property type="entry name" value="Class I glutamine amidotransferase-like"/>
    <property type="match status" value="1"/>
</dbReference>
<dbReference type="SUPFAM" id="SSF52540">
    <property type="entry name" value="P-loop containing nucleoside triphosphate hydrolases"/>
    <property type="match status" value="1"/>
</dbReference>
<dbReference type="PROSITE" id="PS51273">
    <property type="entry name" value="GATASE_TYPE_1"/>
    <property type="match status" value="1"/>
</dbReference>
<accession>A5N3K4</accession>
<comment type="function">
    <text evidence="1">Catalyzes the ATP-dependent amination of UTP to CTP with either L-glutamine or ammonia as the source of nitrogen. Regulates intracellular CTP levels through interactions with the four ribonucleotide triphosphates.</text>
</comment>
<comment type="catalytic activity">
    <reaction evidence="1">
        <text>UTP + L-glutamine + ATP + H2O = CTP + L-glutamate + ADP + phosphate + 2 H(+)</text>
        <dbReference type="Rhea" id="RHEA:26426"/>
        <dbReference type="ChEBI" id="CHEBI:15377"/>
        <dbReference type="ChEBI" id="CHEBI:15378"/>
        <dbReference type="ChEBI" id="CHEBI:29985"/>
        <dbReference type="ChEBI" id="CHEBI:30616"/>
        <dbReference type="ChEBI" id="CHEBI:37563"/>
        <dbReference type="ChEBI" id="CHEBI:43474"/>
        <dbReference type="ChEBI" id="CHEBI:46398"/>
        <dbReference type="ChEBI" id="CHEBI:58359"/>
        <dbReference type="ChEBI" id="CHEBI:456216"/>
        <dbReference type="EC" id="6.3.4.2"/>
    </reaction>
</comment>
<comment type="catalytic activity">
    <reaction evidence="1">
        <text>L-glutamine + H2O = L-glutamate + NH4(+)</text>
        <dbReference type="Rhea" id="RHEA:15889"/>
        <dbReference type="ChEBI" id="CHEBI:15377"/>
        <dbReference type="ChEBI" id="CHEBI:28938"/>
        <dbReference type="ChEBI" id="CHEBI:29985"/>
        <dbReference type="ChEBI" id="CHEBI:58359"/>
    </reaction>
</comment>
<comment type="catalytic activity">
    <reaction evidence="1">
        <text>UTP + NH4(+) + ATP = CTP + ADP + phosphate + 2 H(+)</text>
        <dbReference type="Rhea" id="RHEA:16597"/>
        <dbReference type="ChEBI" id="CHEBI:15378"/>
        <dbReference type="ChEBI" id="CHEBI:28938"/>
        <dbReference type="ChEBI" id="CHEBI:30616"/>
        <dbReference type="ChEBI" id="CHEBI:37563"/>
        <dbReference type="ChEBI" id="CHEBI:43474"/>
        <dbReference type="ChEBI" id="CHEBI:46398"/>
        <dbReference type="ChEBI" id="CHEBI:456216"/>
    </reaction>
</comment>
<comment type="activity regulation">
    <text evidence="1">Allosterically activated by GTP, when glutamine is the substrate; GTP has no effect on the reaction when ammonia is the substrate. The allosteric effector GTP functions by stabilizing the protein conformation that binds the tetrahedral intermediate(s) formed during glutamine hydrolysis. Inhibited by the product CTP, via allosteric rather than competitive inhibition.</text>
</comment>
<comment type="pathway">
    <text evidence="1">Pyrimidine metabolism; CTP biosynthesis via de novo pathway; CTP from UDP: step 2/2.</text>
</comment>
<comment type="subunit">
    <text evidence="1">Homotetramer.</text>
</comment>
<comment type="miscellaneous">
    <text evidence="1">CTPSs have evolved a hybrid strategy for distinguishing between UTP and CTP. The overlapping regions of the product feedback inhibitory and substrate sites recognize a common feature in both compounds, the triphosphate moiety. To differentiate isosteric substrate and product pyrimidine rings, an additional pocket far from the expected kinase/ligase catalytic site, specifically recognizes the cytosine and ribose portions of the product inhibitor.</text>
</comment>
<comment type="similarity">
    <text evidence="1">Belongs to the CTP synthase family.</text>
</comment>
<proteinExistence type="inferred from homology"/>
<reference key="1">
    <citation type="journal article" date="2008" name="Proc. Natl. Acad. Sci. U.S.A.">
        <title>The genome of Clostridium kluyveri, a strict anaerobe with unique metabolic features.</title>
        <authorList>
            <person name="Seedorf H."/>
            <person name="Fricke W.F."/>
            <person name="Veith B."/>
            <person name="Brueggemann H."/>
            <person name="Liesegang H."/>
            <person name="Strittmatter A."/>
            <person name="Miethke M."/>
            <person name="Buckel W."/>
            <person name="Hinderberger J."/>
            <person name="Li F."/>
            <person name="Hagemeier C."/>
            <person name="Thauer R.K."/>
            <person name="Gottschalk G."/>
        </authorList>
    </citation>
    <scope>NUCLEOTIDE SEQUENCE [LARGE SCALE GENOMIC DNA]</scope>
    <source>
        <strain>ATCC 8527 / DSM 555 / NBRC 12016 / NCIMB 10680 / K1</strain>
    </source>
</reference>
<name>PYRG_CLOK5</name>
<organism>
    <name type="scientific">Clostridium kluyveri (strain ATCC 8527 / DSM 555 / NBRC 12016 / NCIMB 10680 / K1)</name>
    <dbReference type="NCBI Taxonomy" id="431943"/>
    <lineage>
        <taxon>Bacteria</taxon>
        <taxon>Bacillati</taxon>
        <taxon>Bacillota</taxon>
        <taxon>Clostridia</taxon>
        <taxon>Eubacteriales</taxon>
        <taxon>Clostridiaceae</taxon>
        <taxon>Clostridium</taxon>
    </lineage>
</organism>
<keyword id="KW-0067">ATP-binding</keyword>
<keyword id="KW-0315">Glutamine amidotransferase</keyword>
<keyword id="KW-0436">Ligase</keyword>
<keyword id="KW-0460">Magnesium</keyword>
<keyword id="KW-0479">Metal-binding</keyword>
<keyword id="KW-0547">Nucleotide-binding</keyword>
<keyword id="KW-0665">Pyrimidine biosynthesis</keyword>
<keyword id="KW-1185">Reference proteome</keyword>
<evidence type="ECO:0000255" key="1">
    <source>
        <dbReference type="HAMAP-Rule" id="MF_01227"/>
    </source>
</evidence>
<feature type="chain" id="PRO_1000139423" description="CTP synthase">
    <location>
        <begin position="1"/>
        <end position="537"/>
    </location>
</feature>
<feature type="domain" description="Glutamine amidotransferase type-1" evidence="1">
    <location>
        <begin position="293"/>
        <end position="535"/>
    </location>
</feature>
<feature type="region of interest" description="Amidoligase domain" evidence="1">
    <location>
        <begin position="1"/>
        <end position="268"/>
    </location>
</feature>
<feature type="active site" description="Nucleophile; for glutamine hydrolysis" evidence="1">
    <location>
        <position position="382"/>
    </location>
</feature>
<feature type="active site" evidence="1">
    <location>
        <position position="508"/>
    </location>
</feature>
<feature type="active site" evidence="1">
    <location>
        <position position="510"/>
    </location>
</feature>
<feature type="binding site" evidence="1">
    <location>
        <position position="14"/>
    </location>
    <ligand>
        <name>CTP</name>
        <dbReference type="ChEBI" id="CHEBI:37563"/>
        <note>allosteric inhibitor</note>
    </ligand>
</feature>
<feature type="binding site" evidence="1">
    <location>
        <position position="14"/>
    </location>
    <ligand>
        <name>UTP</name>
        <dbReference type="ChEBI" id="CHEBI:46398"/>
    </ligand>
</feature>
<feature type="binding site" evidence="1">
    <location>
        <begin position="15"/>
        <end position="20"/>
    </location>
    <ligand>
        <name>ATP</name>
        <dbReference type="ChEBI" id="CHEBI:30616"/>
    </ligand>
</feature>
<feature type="binding site" evidence="1">
    <location>
        <position position="55"/>
    </location>
    <ligand>
        <name>L-glutamine</name>
        <dbReference type="ChEBI" id="CHEBI:58359"/>
    </ligand>
</feature>
<feature type="binding site" evidence="1">
    <location>
        <position position="72"/>
    </location>
    <ligand>
        <name>ATP</name>
        <dbReference type="ChEBI" id="CHEBI:30616"/>
    </ligand>
</feature>
<feature type="binding site" evidence="1">
    <location>
        <position position="72"/>
    </location>
    <ligand>
        <name>Mg(2+)</name>
        <dbReference type="ChEBI" id="CHEBI:18420"/>
    </ligand>
</feature>
<feature type="binding site" evidence="1">
    <location>
        <position position="142"/>
    </location>
    <ligand>
        <name>Mg(2+)</name>
        <dbReference type="ChEBI" id="CHEBI:18420"/>
    </ligand>
</feature>
<feature type="binding site" evidence="1">
    <location>
        <begin position="149"/>
        <end position="151"/>
    </location>
    <ligand>
        <name>CTP</name>
        <dbReference type="ChEBI" id="CHEBI:37563"/>
        <note>allosteric inhibitor</note>
    </ligand>
</feature>
<feature type="binding site" evidence="1">
    <location>
        <begin position="189"/>
        <end position="194"/>
    </location>
    <ligand>
        <name>CTP</name>
        <dbReference type="ChEBI" id="CHEBI:37563"/>
        <note>allosteric inhibitor</note>
    </ligand>
</feature>
<feature type="binding site" evidence="1">
    <location>
        <begin position="189"/>
        <end position="194"/>
    </location>
    <ligand>
        <name>UTP</name>
        <dbReference type="ChEBI" id="CHEBI:46398"/>
    </ligand>
</feature>
<feature type="binding site" evidence="1">
    <location>
        <position position="225"/>
    </location>
    <ligand>
        <name>CTP</name>
        <dbReference type="ChEBI" id="CHEBI:37563"/>
        <note>allosteric inhibitor</note>
    </ligand>
</feature>
<feature type="binding site" evidence="1">
    <location>
        <position position="225"/>
    </location>
    <ligand>
        <name>UTP</name>
        <dbReference type="ChEBI" id="CHEBI:46398"/>
    </ligand>
</feature>
<feature type="binding site" evidence="1">
    <location>
        <position position="355"/>
    </location>
    <ligand>
        <name>L-glutamine</name>
        <dbReference type="ChEBI" id="CHEBI:58359"/>
    </ligand>
</feature>
<feature type="binding site" evidence="1">
    <location>
        <begin position="383"/>
        <end position="386"/>
    </location>
    <ligand>
        <name>L-glutamine</name>
        <dbReference type="ChEBI" id="CHEBI:58359"/>
    </ligand>
</feature>
<feature type="binding site" evidence="1">
    <location>
        <position position="406"/>
    </location>
    <ligand>
        <name>L-glutamine</name>
        <dbReference type="ChEBI" id="CHEBI:58359"/>
    </ligand>
</feature>
<feature type="binding site" evidence="1">
    <location>
        <position position="463"/>
    </location>
    <ligand>
        <name>L-glutamine</name>
        <dbReference type="ChEBI" id="CHEBI:58359"/>
    </ligand>
</feature>